<proteinExistence type="inferred from homology"/>
<evidence type="ECO:0000255" key="1">
    <source>
        <dbReference type="HAMAP-Rule" id="MF_01270"/>
    </source>
</evidence>
<reference key="1">
    <citation type="submission" date="2005-08" db="EMBL/GenBank/DDBJ databases">
        <title>Complete sequence of chromosome 1 of Synechococcus elongatus PCC 7942.</title>
        <authorList>
            <consortium name="US DOE Joint Genome Institute"/>
            <person name="Copeland A."/>
            <person name="Lucas S."/>
            <person name="Lapidus A."/>
            <person name="Barry K."/>
            <person name="Detter J.C."/>
            <person name="Glavina T."/>
            <person name="Hammon N."/>
            <person name="Israni S."/>
            <person name="Pitluck S."/>
            <person name="Schmutz J."/>
            <person name="Larimer F."/>
            <person name="Land M."/>
            <person name="Kyrpides N."/>
            <person name="Lykidis A."/>
            <person name="Golden S."/>
            <person name="Richardson P."/>
        </authorList>
    </citation>
    <scope>NUCLEOTIDE SEQUENCE [LARGE SCALE GENOMIC DNA]</scope>
    <source>
        <strain>ATCC 33912 / PCC 7942 / FACHB-805</strain>
    </source>
</reference>
<accession>Q31P96</accession>
<keyword id="KW-0067">ATP-binding</keyword>
<keyword id="KW-0119">Carbohydrate metabolism</keyword>
<keyword id="KW-0418">Kinase</keyword>
<keyword id="KW-0547">Nucleotide-binding</keyword>
<keyword id="KW-1185">Reference proteome</keyword>
<keyword id="KW-0808">Transferase</keyword>
<name>ANMK_SYNE7</name>
<feature type="chain" id="PRO_0000250072" description="Anhydro-N-acetylmuramic acid kinase">
    <location>
        <begin position="1"/>
        <end position="378"/>
    </location>
</feature>
<feature type="binding site" evidence="1">
    <location>
        <begin position="9"/>
        <end position="16"/>
    </location>
    <ligand>
        <name>ATP</name>
        <dbReference type="ChEBI" id="CHEBI:30616"/>
    </ligand>
</feature>
<organism>
    <name type="scientific">Synechococcus elongatus (strain ATCC 33912 / PCC 7942 / FACHB-805)</name>
    <name type="common">Anacystis nidulans R2</name>
    <dbReference type="NCBI Taxonomy" id="1140"/>
    <lineage>
        <taxon>Bacteria</taxon>
        <taxon>Bacillati</taxon>
        <taxon>Cyanobacteriota</taxon>
        <taxon>Cyanophyceae</taxon>
        <taxon>Synechococcales</taxon>
        <taxon>Synechococcaceae</taxon>
        <taxon>Synechococcus</taxon>
    </lineage>
</organism>
<gene>
    <name evidence="1" type="primary">anmK</name>
    <name type="ordered locus">Synpcc7942_1093</name>
</gene>
<comment type="function">
    <text evidence="1">Catalyzes the specific phosphorylation of 1,6-anhydro-N-acetylmuramic acid (anhMurNAc) with the simultaneous cleavage of the 1,6-anhydro ring, generating MurNAc-6-P. Is required for the utilization of anhMurNAc either imported from the medium or derived from its own cell wall murein, and thus plays a role in cell wall recycling.</text>
</comment>
<comment type="catalytic activity">
    <reaction evidence="1">
        <text>1,6-anhydro-N-acetyl-beta-muramate + ATP + H2O = N-acetyl-D-muramate 6-phosphate + ADP + H(+)</text>
        <dbReference type="Rhea" id="RHEA:24952"/>
        <dbReference type="ChEBI" id="CHEBI:15377"/>
        <dbReference type="ChEBI" id="CHEBI:15378"/>
        <dbReference type="ChEBI" id="CHEBI:30616"/>
        <dbReference type="ChEBI" id="CHEBI:58690"/>
        <dbReference type="ChEBI" id="CHEBI:58722"/>
        <dbReference type="ChEBI" id="CHEBI:456216"/>
        <dbReference type="EC" id="2.7.1.170"/>
    </reaction>
</comment>
<comment type="pathway">
    <text evidence="1">Amino-sugar metabolism; 1,6-anhydro-N-acetylmuramate degradation.</text>
</comment>
<comment type="pathway">
    <text evidence="1">Cell wall biogenesis; peptidoglycan recycling.</text>
</comment>
<comment type="similarity">
    <text evidence="1">Belongs to the anhydro-N-acetylmuramic acid kinase family.</text>
</comment>
<dbReference type="EC" id="2.7.1.170" evidence="1"/>
<dbReference type="EMBL" id="CP000100">
    <property type="protein sequence ID" value="ABB57123.1"/>
    <property type="molecule type" value="Genomic_DNA"/>
</dbReference>
<dbReference type="RefSeq" id="WP_011377860.1">
    <property type="nucleotide sequence ID" value="NZ_JACJTX010000003.1"/>
</dbReference>
<dbReference type="SMR" id="Q31P96"/>
<dbReference type="STRING" id="1140.Synpcc7942_1093"/>
<dbReference type="PaxDb" id="1140-Synpcc7942_1093"/>
<dbReference type="KEGG" id="syf:Synpcc7942_1093"/>
<dbReference type="eggNOG" id="COG2377">
    <property type="taxonomic scope" value="Bacteria"/>
</dbReference>
<dbReference type="HOGENOM" id="CLU_038782_1_0_3"/>
<dbReference type="OrthoDB" id="9763949at2"/>
<dbReference type="BioCyc" id="SYNEL:SYNPCC7942_1093-MONOMER"/>
<dbReference type="UniPathway" id="UPA00343"/>
<dbReference type="UniPathway" id="UPA00544"/>
<dbReference type="Proteomes" id="UP000889800">
    <property type="component" value="Chromosome"/>
</dbReference>
<dbReference type="GO" id="GO:0005524">
    <property type="term" value="F:ATP binding"/>
    <property type="evidence" value="ECO:0007669"/>
    <property type="project" value="UniProtKB-UniRule"/>
</dbReference>
<dbReference type="GO" id="GO:0016301">
    <property type="term" value="F:kinase activity"/>
    <property type="evidence" value="ECO:0007669"/>
    <property type="project" value="UniProtKB-KW"/>
</dbReference>
<dbReference type="GO" id="GO:0016773">
    <property type="term" value="F:phosphotransferase activity, alcohol group as acceptor"/>
    <property type="evidence" value="ECO:0007669"/>
    <property type="project" value="UniProtKB-UniRule"/>
</dbReference>
<dbReference type="GO" id="GO:0097175">
    <property type="term" value="P:1,6-anhydro-N-acetyl-beta-muramic acid catabolic process"/>
    <property type="evidence" value="ECO:0007669"/>
    <property type="project" value="UniProtKB-UniRule"/>
</dbReference>
<dbReference type="GO" id="GO:0006040">
    <property type="term" value="P:amino sugar metabolic process"/>
    <property type="evidence" value="ECO:0007669"/>
    <property type="project" value="InterPro"/>
</dbReference>
<dbReference type="GO" id="GO:0009254">
    <property type="term" value="P:peptidoglycan turnover"/>
    <property type="evidence" value="ECO:0007669"/>
    <property type="project" value="UniProtKB-UniRule"/>
</dbReference>
<dbReference type="CDD" id="cd24050">
    <property type="entry name" value="ASKHA_NBD_ANMK"/>
    <property type="match status" value="1"/>
</dbReference>
<dbReference type="Gene3D" id="3.30.420.40">
    <property type="match status" value="2"/>
</dbReference>
<dbReference type="HAMAP" id="MF_01270">
    <property type="entry name" value="AnhMurNAc_kinase"/>
    <property type="match status" value="1"/>
</dbReference>
<dbReference type="InterPro" id="IPR005338">
    <property type="entry name" value="Anhydro_N_Ac-Mur_kinase"/>
</dbReference>
<dbReference type="InterPro" id="IPR043129">
    <property type="entry name" value="ATPase_NBD"/>
</dbReference>
<dbReference type="NCBIfam" id="NF007143">
    <property type="entry name" value="PRK09585.2-2"/>
    <property type="match status" value="1"/>
</dbReference>
<dbReference type="NCBIfam" id="NF007148">
    <property type="entry name" value="PRK09585.3-2"/>
    <property type="match status" value="1"/>
</dbReference>
<dbReference type="PANTHER" id="PTHR30605">
    <property type="entry name" value="ANHYDRO-N-ACETYLMURAMIC ACID KINASE"/>
    <property type="match status" value="1"/>
</dbReference>
<dbReference type="PANTHER" id="PTHR30605:SF0">
    <property type="entry name" value="ANHYDRO-N-ACETYLMURAMIC ACID KINASE"/>
    <property type="match status" value="1"/>
</dbReference>
<dbReference type="Pfam" id="PF03702">
    <property type="entry name" value="AnmK"/>
    <property type="match status" value="1"/>
</dbReference>
<dbReference type="SUPFAM" id="SSF53067">
    <property type="entry name" value="Actin-like ATPase domain"/>
    <property type="match status" value="1"/>
</dbReference>
<sequence>MRVLGLISGTSADGIDVAIAEIQGFQADLSVALLAFETIAYEPSLRDRILEVAAGFPLSVAELTALDAAIAQAFATAAQTLIQQHGAVDLIGSHGQTVYHQPPQAGQLGWSVQLGWGAAIAQQTGITTVSNFRSADLALGGQGAPLVPAVDLWLLGSDSENRCVQNIGGIGNLTWLPRRDHPDWQSEVRGWDTGPGNSLLDLAVQKLSQGRLSYDDGGQWAATGQIDQVLCDRWLQEDDYFRLPPPKSTGRERYGWQFLETWAAELDRLTAADQLATLTEFTAASIVNNYRHFLPALPDRVLVCGGGLHNQFLLQRLQQQLPTVKIASTDDFGVNSQAKEAIAIAVLAYWRQHNVPGNLPAVTGASGPALLGDVFART</sequence>
<protein>
    <recommendedName>
        <fullName evidence="1">Anhydro-N-acetylmuramic acid kinase</fullName>
        <ecNumber evidence="1">2.7.1.170</ecNumber>
    </recommendedName>
    <alternativeName>
        <fullName evidence="1">AnhMurNAc kinase</fullName>
    </alternativeName>
</protein>